<comment type="function">
    <text evidence="2 4">Negatively regulates the PAK1 kinase. PAK1 is a member of the PAK kinase family, which has been shown to play a positive role in the regulation of signaling pathways involving MAPK8 and RELA. PAK1 exists as an inactive homodimer, which is activated by binding of small GTPases such as CDC42 to an N-terminal regulatory domain. PAK1IP1 also binds to the N-terminus of PAK1, and inhibits the specific activation of PAK1 by CDC42. May be involved in ribosomal large subunit assembly (PubMed:24120868).</text>
</comment>
<comment type="subunit">
    <text evidence="2">Interacts with PAK1.</text>
</comment>
<comment type="interaction">
    <interactant intactId="EBI-7641942">
        <id>Q9NWT1</id>
    </interactant>
    <interactant intactId="EBI-16439278">
        <id>Q6FHY5</id>
        <label>MEOX2</label>
    </interactant>
    <organismsDiffer>false</organismsDiffer>
    <experiments>6</experiments>
</comment>
<comment type="interaction">
    <interactant intactId="EBI-7641942">
        <id>Q9NWT1</id>
    </interactant>
    <interactant intactId="EBI-742388">
        <id>Q9H8W4</id>
        <label>PLEKHF2</label>
    </interactant>
    <organismsDiffer>false</organismsDiffer>
    <experiments>3</experiments>
</comment>
<comment type="subcellular location">
    <subcellularLocation>
        <location evidence="3">Nucleus</location>
        <location evidence="3">Nucleolus</location>
    </subcellularLocation>
</comment>
<comment type="tissue specificity">
    <text evidence="2">Expressed in brain, colon, heart, kidney, liver, lung, muscle, peripheral blood leukocytes, placenta, small intestine, spleen and thymus.</text>
</comment>
<reference key="1">
    <citation type="journal article" date="2001" name="Proc. Natl. Acad. Sci. U.S.A.">
        <title>Regulation of the p21-activated kinase (PAK) by a human Gbeta -like WD-repeat protein, hPIP1.</title>
        <authorList>
            <person name="Xia C."/>
            <person name="Ma W."/>
            <person name="Stafford L.J."/>
            <person name="Marcus S."/>
            <person name="Xiong W.-C."/>
            <person name="Liu M."/>
        </authorList>
    </citation>
    <scope>NUCLEOTIDE SEQUENCE [MRNA]</scope>
    <scope>FUNCTION</scope>
    <scope>INTERACTION WITH PAK1</scope>
    <scope>TISSUE SPECIFICITY</scope>
</reference>
<reference key="2">
    <citation type="journal article" date="2004" name="Nat. Genet.">
        <title>Complete sequencing and characterization of 21,243 full-length human cDNAs.</title>
        <authorList>
            <person name="Ota T."/>
            <person name="Suzuki Y."/>
            <person name="Nishikawa T."/>
            <person name="Otsuki T."/>
            <person name="Sugiyama T."/>
            <person name="Irie R."/>
            <person name="Wakamatsu A."/>
            <person name="Hayashi K."/>
            <person name="Sato H."/>
            <person name="Nagai K."/>
            <person name="Kimura K."/>
            <person name="Makita H."/>
            <person name="Sekine M."/>
            <person name="Obayashi M."/>
            <person name="Nishi T."/>
            <person name="Shibahara T."/>
            <person name="Tanaka T."/>
            <person name="Ishii S."/>
            <person name="Yamamoto J."/>
            <person name="Saito K."/>
            <person name="Kawai Y."/>
            <person name="Isono Y."/>
            <person name="Nakamura Y."/>
            <person name="Nagahari K."/>
            <person name="Murakami K."/>
            <person name="Yasuda T."/>
            <person name="Iwayanagi T."/>
            <person name="Wagatsuma M."/>
            <person name="Shiratori A."/>
            <person name="Sudo H."/>
            <person name="Hosoiri T."/>
            <person name="Kaku Y."/>
            <person name="Kodaira H."/>
            <person name="Kondo H."/>
            <person name="Sugawara M."/>
            <person name="Takahashi M."/>
            <person name="Kanda K."/>
            <person name="Yokoi T."/>
            <person name="Furuya T."/>
            <person name="Kikkawa E."/>
            <person name="Omura Y."/>
            <person name="Abe K."/>
            <person name="Kamihara K."/>
            <person name="Katsuta N."/>
            <person name="Sato K."/>
            <person name="Tanikawa M."/>
            <person name="Yamazaki M."/>
            <person name="Ninomiya K."/>
            <person name="Ishibashi T."/>
            <person name="Yamashita H."/>
            <person name="Murakawa K."/>
            <person name="Fujimori K."/>
            <person name="Tanai H."/>
            <person name="Kimata M."/>
            <person name="Watanabe M."/>
            <person name="Hiraoka S."/>
            <person name="Chiba Y."/>
            <person name="Ishida S."/>
            <person name="Ono Y."/>
            <person name="Takiguchi S."/>
            <person name="Watanabe S."/>
            <person name="Yosida M."/>
            <person name="Hotuta T."/>
            <person name="Kusano J."/>
            <person name="Kanehori K."/>
            <person name="Takahashi-Fujii A."/>
            <person name="Hara H."/>
            <person name="Tanase T.-O."/>
            <person name="Nomura Y."/>
            <person name="Togiya S."/>
            <person name="Komai F."/>
            <person name="Hara R."/>
            <person name="Takeuchi K."/>
            <person name="Arita M."/>
            <person name="Imose N."/>
            <person name="Musashino K."/>
            <person name="Yuuki H."/>
            <person name="Oshima A."/>
            <person name="Sasaki N."/>
            <person name="Aotsuka S."/>
            <person name="Yoshikawa Y."/>
            <person name="Matsunawa H."/>
            <person name="Ichihara T."/>
            <person name="Shiohata N."/>
            <person name="Sano S."/>
            <person name="Moriya S."/>
            <person name="Momiyama H."/>
            <person name="Satoh N."/>
            <person name="Takami S."/>
            <person name="Terashima Y."/>
            <person name="Suzuki O."/>
            <person name="Nakagawa S."/>
            <person name="Senoh A."/>
            <person name="Mizoguchi H."/>
            <person name="Goto Y."/>
            <person name="Shimizu F."/>
            <person name="Wakebe H."/>
            <person name="Hishigaki H."/>
            <person name="Watanabe T."/>
            <person name="Sugiyama A."/>
            <person name="Takemoto M."/>
            <person name="Kawakami B."/>
            <person name="Yamazaki M."/>
            <person name="Watanabe K."/>
            <person name="Kumagai A."/>
            <person name="Itakura S."/>
            <person name="Fukuzumi Y."/>
            <person name="Fujimori Y."/>
            <person name="Komiyama M."/>
            <person name="Tashiro H."/>
            <person name="Tanigami A."/>
            <person name="Fujiwara T."/>
            <person name="Ono T."/>
            <person name="Yamada K."/>
            <person name="Fujii Y."/>
            <person name="Ozaki K."/>
            <person name="Hirao M."/>
            <person name="Ohmori Y."/>
            <person name="Kawabata A."/>
            <person name="Hikiji T."/>
            <person name="Kobatake N."/>
            <person name="Inagaki H."/>
            <person name="Ikema Y."/>
            <person name="Okamoto S."/>
            <person name="Okitani R."/>
            <person name="Kawakami T."/>
            <person name="Noguchi S."/>
            <person name="Itoh T."/>
            <person name="Shigeta K."/>
            <person name="Senba T."/>
            <person name="Matsumura K."/>
            <person name="Nakajima Y."/>
            <person name="Mizuno T."/>
            <person name="Morinaga M."/>
            <person name="Sasaki M."/>
            <person name="Togashi T."/>
            <person name="Oyama M."/>
            <person name="Hata H."/>
            <person name="Watanabe M."/>
            <person name="Komatsu T."/>
            <person name="Mizushima-Sugano J."/>
            <person name="Satoh T."/>
            <person name="Shirai Y."/>
            <person name="Takahashi Y."/>
            <person name="Nakagawa K."/>
            <person name="Okumura K."/>
            <person name="Nagase T."/>
            <person name="Nomura N."/>
            <person name="Kikuchi H."/>
            <person name="Masuho Y."/>
            <person name="Yamashita R."/>
            <person name="Nakai K."/>
            <person name="Yada T."/>
            <person name="Nakamura Y."/>
            <person name="Ohara O."/>
            <person name="Isogai T."/>
            <person name="Sugano S."/>
        </authorList>
    </citation>
    <scope>NUCLEOTIDE SEQUENCE [LARGE SCALE MRNA]</scope>
</reference>
<reference key="3">
    <citation type="journal article" date="2003" name="Nature">
        <title>The DNA sequence and analysis of human chromosome 6.</title>
        <authorList>
            <person name="Mungall A.J."/>
            <person name="Palmer S.A."/>
            <person name="Sims S.K."/>
            <person name="Edwards C.A."/>
            <person name="Ashurst J.L."/>
            <person name="Wilming L."/>
            <person name="Jones M.C."/>
            <person name="Horton R."/>
            <person name="Hunt S.E."/>
            <person name="Scott C.E."/>
            <person name="Gilbert J.G.R."/>
            <person name="Clamp M.E."/>
            <person name="Bethel G."/>
            <person name="Milne S."/>
            <person name="Ainscough R."/>
            <person name="Almeida J.P."/>
            <person name="Ambrose K.D."/>
            <person name="Andrews T.D."/>
            <person name="Ashwell R.I.S."/>
            <person name="Babbage A.K."/>
            <person name="Bagguley C.L."/>
            <person name="Bailey J."/>
            <person name="Banerjee R."/>
            <person name="Barker D.J."/>
            <person name="Barlow K.F."/>
            <person name="Bates K."/>
            <person name="Beare D.M."/>
            <person name="Beasley H."/>
            <person name="Beasley O."/>
            <person name="Bird C.P."/>
            <person name="Blakey S.E."/>
            <person name="Bray-Allen S."/>
            <person name="Brook J."/>
            <person name="Brown A.J."/>
            <person name="Brown J.Y."/>
            <person name="Burford D.C."/>
            <person name="Burrill W."/>
            <person name="Burton J."/>
            <person name="Carder C."/>
            <person name="Carter N.P."/>
            <person name="Chapman J.C."/>
            <person name="Clark S.Y."/>
            <person name="Clark G."/>
            <person name="Clee C.M."/>
            <person name="Clegg S."/>
            <person name="Cobley V."/>
            <person name="Collier R.E."/>
            <person name="Collins J.E."/>
            <person name="Colman L.K."/>
            <person name="Corby N.R."/>
            <person name="Coville G.J."/>
            <person name="Culley K.M."/>
            <person name="Dhami P."/>
            <person name="Davies J."/>
            <person name="Dunn M."/>
            <person name="Earthrowl M.E."/>
            <person name="Ellington A.E."/>
            <person name="Evans K.A."/>
            <person name="Faulkner L."/>
            <person name="Francis M.D."/>
            <person name="Frankish A."/>
            <person name="Frankland J."/>
            <person name="French L."/>
            <person name="Garner P."/>
            <person name="Garnett J."/>
            <person name="Ghori M.J."/>
            <person name="Gilby L.M."/>
            <person name="Gillson C.J."/>
            <person name="Glithero R.J."/>
            <person name="Grafham D.V."/>
            <person name="Grant M."/>
            <person name="Gribble S."/>
            <person name="Griffiths C."/>
            <person name="Griffiths M.N.D."/>
            <person name="Hall R."/>
            <person name="Halls K.S."/>
            <person name="Hammond S."/>
            <person name="Harley J.L."/>
            <person name="Hart E.A."/>
            <person name="Heath P.D."/>
            <person name="Heathcott R."/>
            <person name="Holmes S.J."/>
            <person name="Howden P.J."/>
            <person name="Howe K.L."/>
            <person name="Howell G.R."/>
            <person name="Huckle E."/>
            <person name="Humphray S.J."/>
            <person name="Humphries M.D."/>
            <person name="Hunt A.R."/>
            <person name="Johnson C.M."/>
            <person name="Joy A.A."/>
            <person name="Kay M."/>
            <person name="Keenan S.J."/>
            <person name="Kimberley A.M."/>
            <person name="King A."/>
            <person name="Laird G.K."/>
            <person name="Langford C."/>
            <person name="Lawlor S."/>
            <person name="Leongamornlert D.A."/>
            <person name="Leversha M."/>
            <person name="Lloyd C.R."/>
            <person name="Lloyd D.M."/>
            <person name="Loveland J.E."/>
            <person name="Lovell J."/>
            <person name="Martin S."/>
            <person name="Mashreghi-Mohammadi M."/>
            <person name="Maslen G.L."/>
            <person name="Matthews L."/>
            <person name="McCann O.T."/>
            <person name="McLaren S.J."/>
            <person name="McLay K."/>
            <person name="McMurray A."/>
            <person name="Moore M.J.F."/>
            <person name="Mullikin J.C."/>
            <person name="Niblett D."/>
            <person name="Nickerson T."/>
            <person name="Novik K.L."/>
            <person name="Oliver K."/>
            <person name="Overton-Larty E.K."/>
            <person name="Parker A."/>
            <person name="Patel R."/>
            <person name="Pearce A.V."/>
            <person name="Peck A.I."/>
            <person name="Phillimore B.J.C.T."/>
            <person name="Phillips S."/>
            <person name="Plumb R.W."/>
            <person name="Porter K.M."/>
            <person name="Ramsey Y."/>
            <person name="Ranby S.A."/>
            <person name="Rice C.M."/>
            <person name="Ross M.T."/>
            <person name="Searle S.M."/>
            <person name="Sehra H.K."/>
            <person name="Sheridan E."/>
            <person name="Skuce C.D."/>
            <person name="Smith S."/>
            <person name="Smith M."/>
            <person name="Spraggon L."/>
            <person name="Squares S.L."/>
            <person name="Steward C.A."/>
            <person name="Sycamore N."/>
            <person name="Tamlyn-Hall G."/>
            <person name="Tester J."/>
            <person name="Theaker A.J."/>
            <person name="Thomas D.W."/>
            <person name="Thorpe A."/>
            <person name="Tracey A."/>
            <person name="Tromans A."/>
            <person name="Tubby B."/>
            <person name="Wall M."/>
            <person name="Wallis J.M."/>
            <person name="West A.P."/>
            <person name="White S.S."/>
            <person name="Whitehead S.L."/>
            <person name="Whittaker H."/>
            <person name="Wild A."/>
            <person name="Willey D.J."/>
            <person name="Wilmer T.E."/>
            <person name="Wood J.M."/>
            <person name="Wray P.W."/>
            <person name="Wyatt J.C."/>
            <person name="Young L."/>
            <person name="Younger R.M."/>
            <person name="Bentley D.R."/>
            <person name="Coulson A."/>
            <person name="Durbin R.M."/>
            <person name="Hubbard T."/>
            <person name="Sulston J.E."/>
            <person name="Dunham I."/>
            <person name="Rogers J."/>
            <person name="Beck S."/>
        </authorList>
    </citation>
    <scope>NUCLEOTIDE SEQUENCE [LARGE SCALE GENOMIC DNA]</scope>
</reference>
<reference key="4">
    <citation type="journal article" date="2004" name="Genome Res.">
        <title>The status, quality, and expansion of the NIH full-length cDNA project: the Mammalian Gene Collection (MGC).</title>
        <authorList>
            <consortium name="The MGC Project Team"/>
        </authorList>
    </citation>
    <scope>NUCLEOTIDE SEQUENCE [LARGE SCALE MRNA]</scope>
    <source>
        <tissue>Prostate</tissue>
    </source>
</reference>
<reference key="5">
    <citation type="journal article" date="2002" name="Mol. Biol. Cell">
        <title>Functional proteomic analysis of human nucleolus.</title>
        <authorList>
            <person name="Scherl A."/>
            <person name="Coute Y."/>
            <person name="Deon C."/>
            <person name="Calle A."/>
            <person name="Kindbeiter K."/>
            <person name="Sanchez J.-C."/>
            <person name="Greco A."/>
            <person name="Hochstrasser D.F."/>
            <person name="Diaz J.-J."/>
        </authorList>
    </citation>
    <scope>SUBCELLULAR LOCATION [LARGE SCALE ANALYSIS]</scope>
    <source>
        <tissue>Cervix carcinoma</tissue>
    </source>
</reference>
<reference key="6">
    <citation type="journal article" date="2008" name="Proc. Natl. Acad. Sci. U.S.A.">
        <title>A quantitative atlas of mitotic phosphorylation.</title>
        <authorList>
            <person name="Dephoure N."/>
            <person name="Zhou C."/>
            <person name="Villen J."/>
            <person name="Beausoleil S.A."/>
            <person name="Bakalarski C.E."/>
            <person name="Elledge S.J."/>
            <person name="Gygi S.P."/>
        </authorList>
    </citation>
    <scope>PHOSPHORYLATION [LARGE SCALE ANALYSIS] AT SER-320</scope>
    <scope>IDENTIFICATION BY MASS SPECTROMETRY [LARGE SCALE ANALYSIS]</scope>
    <source>
        <tissue>Cervix carcinoma</tissue>
    </source>
</reference>
<reference key="7">
    <citation type="journal article" date="2009" name="Anal. Chem.">
        <title>Lys-N and trypsin cover complementary parts of the phosphoproteome in a refined SCX-based approach.</title>
        <authorList>
            <person name="Gauci S."/>
            <person name="Helbig A.O."/>
            <person name="Slijper M."/>
            <person name="Krijgsveld J."/>
            <person name="Heck A.J."/>
            <person name="Mohammed S."/>
        </authorList>
    </citation>
    <scope>IDENTIFICATION BY MASS SPECTROMETRY [LARGE SCALE ANALYSIS]</scope>
</reference>
<reference key="8">
    <citation type="journal article" date="2010" name="Sci. Signal.">
        <title>Quantitative phosphoproteomics reveals widespread full phosphorylation site occupancy during mitosis.</title>
        <authorList>
            <person name="Olsen J.V."/>
            <person name="Vermeulen M."/>
            <person name="Santamaria A."/>
            <person name="Kumar C."/>
            <person name="Miller M.L."/>
            <person name="Jensen L.J."/>
            <person name="Gnad F."/>
            <person name="Cox J."/>
            <person name="Jensen T.S."/>
            <person name="Nigg E.A."/>
            <person name="Brunak S."/>
            <person name="Mann M."/>
        </authorList>
    </citation>
    <scope>PHOSPHORYLATION [LARGE SCALE ANALYSIS] AT SER-320</scope>
    <scope>IDENTIFICATION BY MASS SPECTROMETRY [LARGE SCALE ANALYSIS]</scope>
    <source>
        <tissue>Cervix carcinoma</tissue>
    </source>
</reference>
<reference key="9">
    <citation type="journal article" date="2011" name="Sci. Signal.">
        <title>System-wide temporal characterization of the proteome and phosphoproteome of human embryonic stem cell differentiation.</title>
        <authorList>
            <person name="Rigbolt K.T."/>
            <person name="Prokhorova T.A."/>
            <person name="Akimov V."/>
            <person name="Henningsen J."/>
            <person name="Johansen P.T."/>
            <person name="Kratchmarova I."/>
            <person name="Kassem M."/>
            <person name="Mann M."/>
            <person name="Olsen J.V."/>
            <person name="Blagoev B."/>
        </authorList>
    </citation>
    <scope>PHOSPHORYLATION [LARGE SCALE ANALYSIS] AT SER-320</scope>
    <scope>IDENTIFICATION BY MASS SPECTROMETRY [LARGE SCALE ANALYSIS]</scope>
</reference>
<reference key="10">
    <citation type="journal article" date="2013" name="Cell Rep.">
        <title>The 5S RNP couples p53 homeostasis to ribosome biogenesis and nucleolar stress.</title>
        <authorList>
            <person name="Sloan K.E."/>
            <person name="Bohnsack M.T."/>
            <person name="Watkins N.J."/>
        </authorList>
    </citation>
    <scope>FUNCTION</scope>
</reference>
<reference key="11">
    <citation type="journal article" date="2013" name="J. Proteome Res.">
        <title>Toward a comprehensive characterization of a human cancer cell phosphoproteome.</title>
        <authorList>
            <person name="Zhou H."/>
            <person name="Di Palma S."/>
            <person name="Preisinger C."/>
            <person name="Peng M."/>
            <person name="Polat A.N."/>
            <person name="Heck A.J."/>
            <person name="Mohammed S."/>
        </authorList>
    </citation>
    <scope>PHOSPHORYLATION [LARGE SCALE ANALYSIS] AT SER-320</scope>
    <scope>IDENTIFICATION BY MASS SPECTROMETRY [LARGE SCALE ANALYSIS]</scope>
    <source>
        <tissue>Cervix carcinoma</tissue>
        <tissue>Erythroleukemia</tissue>
    </source>
</reference>
<feature type="chain" id="PRO_0000051125" description="p21-activated protein kinase-interacting protein 1">
    <location>
        <begin position="1"/>
        <end position="392"/>
    </location>
</feature>
<feature type="repeat" description="WD 1">
    <location>
        <begin position="33"/>
        <end position="72"/>
    </location>
</feature>
<feature type="repeat" description="WD 2">
    <location>
        <begin position="73"/>
        <end position="113"/>
    </location>
</feature>
<feature type="repeat" description="WD 3">
    <location>
        <begin position="114"/>
        <end position="155"/>
    </location>
</feature>
<feature type="repeat" description="WD 4">
    <location>
        <begin position="156"/>
        <end position="195"/>
    </location>
</feature>
<feature type="repeat" description="WD 5">
    <location>
        <begin position="196"/>
        <end position="235"/>
    </location>
</feature>
<feature type="repeat" description="WD 6">
    <location>
        <begin position="236"/>
        <end position="275"/>
    </location>
</feature>
<feature type="region of interest" description="Disordered" evidence="1">
    <location>
        <begin position="312"/>
        <end position="392"/>
    </location>
</feature>
<feature type="compositionally biased region" description="Basic and acidic residues" evidence="1">
    <location>
        <begin position="325"/>
        <end position="345"/>
    </location>
</feature>
<feature type="compositionally biased region" description="Basic residues" evidence="1">
    <location>
        <begin position="381"/>
        <end position="392"/>
    </location>
</feature>
<feature type="modified residue" description="Phosphoserine" evidence="6 7 8 9">
    <location>
        <position position="320"/>
    </location>
</feature>
<feature type="sequence conflict" description="In Ref. 2; BAA91296." evidence="5" ref="2">
    <original>E</original>
    <variation>K</variation>
    <location>
        <position position="22"/>
    </location>
</feature>
<feature type="sequence conflict" description="In Ref. 1; AAK57477." evidence="5" ref="1">
    <original>G</original>
    <variation>R</variation>
    <location>
        <position position="124"/>
    </location>
</feature>
<feature type="sequence conflict" description="In Ref. 4; AAH10907." evidence="5" ref="4">
    <original>I</original>
    <variation>V</variation>
    <location>
        <position position="201"/>
    </location>
</feature>
<feature type="sequence conflict" description="In Ref. 1; AAK57477." evidence="5" ref="1">
    <original>P</original>
    <variation>L</variation>
    <location>
        <position position="257"/>
    </location>
</feature>
<feature type="sequence conflict" description="In Ref. 1; AAK57477." evidence="5" ref="1">
    <original>M</original>
    <variation>R</variation>
    <location>
        <position position="273"/>
    </location>
</feature>
<feature type="sequence conflict" description="In Ref. 4; AAH10907." evidence="5" ref="4">
    <original>K</original>
    <variation>E</variation>
    <location>
        <position position="277"/>
    </location>
</feature>
<feature type="sequence conflict" description="In Ref. 2; BAA91296." evidence="5" ref="2">
    <location>
        <position position="311"/>
    </location>
</feature>
<organism>
    <name type="scientific">Homo sapiens</name>
    <name type="common">Human</name>
    <dbReference type="NCBI Taxonomy" id="9606"/>
    <lineage>
        <taxon>Eukaryota</taxon>
        <taxon>Metazoa</taxon>
        <taxon>Chordata</taxon>
        <taxon>Craniata</taxon>
        <taxon>Vertebrata</taxon>
        <taxon>Euteleostomi</taxon>
        <taxon>Mammalia</taxon>
        <taxon>Eutheria</taxon>
        <taxon>Euarchontoglires</taxon>
        <taxon>Primates</taxon>
        <taxon>Haplorrhini</taxon>
        <taxon>Catarrhini</taxon>
        <taxon>Hominidae</taxon>
        <taxon>Homo</taxon>
    </lineage>
</organism>
<protein>
    <recommendedName>
        <fullName>p21-activated protein kinase-interacting protein 1</fullName>
    </recommendedName>
    <alternativeName>
        <fullName>PAK/PLC-interacting protein 1</fullName>
        <shortName>hPIP1</shortName>
    </alternativeName>
    <alternativeName>
        <fullName>PAK1-interacting protein 1</fullName>
    </alternativeName>
    <alternativeName>
        <fullName>WD repeat-containing protein 84</fullName>
    </alternativeName>
</protein>
<proteinExistence type="evidence at protein level"/>
<gene>
    <name type="primary">PAK1IP1</name>
    <name type="synonym">PIP1</name>
    <name type="synonym">WDR84</name>
</gene>
<dbReference type="EMBL" id="AF283303">
    <property type="protein sequence ID" value="AAK57477.1"/>
    <property type="molecule type" value="mRNA"/>
</dbReference>
<dbReference type="EMBL" id="AK000631">
    <property type="protein sequence ID" value="BAA91296.1"/>
    <property type="molecule type" value="mRNA"/>
</dbReference>
<dbReference type="EMBL" id="AL358777">
    <property type="status" value="NOT_ANNOTATED_CDS"/>
    <property type="molecule type" value="Genomic_DNA"/>
</dbReference>
<dbReference type="EMBL" id="BC010907">
    <property type="protein sequence ID" value="AAH10907.1"/>
    <property type="molecule type" value="mRNA"/>
</dbReference>
<dbReference type="CCDS" id="CCDS34339.1"/>
<dbReference type="RefSeq" id="NP_060376.2">
    <property type="nucleotide sequence ID" value="NM_017906.3"/>
</dbReference>
<dbReference type="SMR" id="Q9NWT1"/>
<dbReference type="BioGRID" id="120335">
    <property type="interactions" value="161"/>
</dbReference>
<dbReference type="FunCoup" id="Q9NWT1">
    <property type="interactions" value="1779"/>
</dbReference>
<dbReference type="IntAct" id="Q9NWT1">
    <property type="interactions" value="98"/>
</dbReference>
<dbReference type="MINT" id="Q9NWT1"/>
<dbReference type="STRING" id="9606.ENSP00000368887"/>
<dbReference type="GlyGen" id="Q9NWT1">
    <property type="glycosylation" value="1 site, 1 O-linked glycan (1 site)"/>
</dbReference>
<dbReference type="iPTMnet" id="Q9NWT1"/>
<dbReference type="PhosphoSitePlus" id="Q9NWT1"/>
<dbReference type="SwissPalm" id="Q9NWT1"/>
<dbReference type="BioMuta" id="PAK1IP1"/>
<dbReference type="DMDM" id="71153057"/>
<dbReference type="jPOST" id="Q9NWT1"/>
<dbReference type="MassIVE" id="Q9NWT1"/>
<dbReference type="PaxDb" id="9606-ENSP00000368887"/>
<dbReference type="PeptideAtlas" id="Q9NWT1"/>
<dbReference type="ProteomicsDB" id="82977"/>
<dbReference type="Pumba" id="Q9NWT1"/>
<dbReference type="Antibodypedia" id="24813">
    <property type="antibodies" value="92 antibodies from 23 providers"/>
</dbReference>
<dbReference type="DNASU" id="55003"/>
<dbReference type="Ensembl" id="ENST00000379568.4">
    <property type="protein sequence ID" value="ENSP00000368887.3"/>
    <property type="gene ID" value="ENSG00000111845.5"/>
</dbReference>
<dbReference type="Ensembl" id="ENST00000644756.2">
    <property type="protein sequence ID" value="ENSP00000496482.1"/>
    <property type="gene ID" value="ENSG00000285226.2"/>
</dbReference>
<dbReference type="GeneID" id="55003"/>
<dbReference type="KEGG" id="hsa:55003"/>
<dbReference type="MANE-Select" id="ENST00000379568.4">
    <property type="protein sequence ID" value="ENSP00000368887.3"/>
    <property type="RefSeq nucleotide sequence ID" value="NM_017906.3"/>
    <property type="RefSeq protein sequence ID" value="NP_060376.2"/>
</dbReference>
<dbReference type="UCSC" id="uc003mzg.4">
    <property type="organism name" value="human"/>
</dbReference>
<dbReference type="AGR" id="HGNC:20882"/>
<dbReference type="CTD" id="55003"/>
<dbReference type="DisGeNET" id="55003"/>
<dbReference type="GeneCards" id="PAK1IP1"/>
<dbReference type="HGNC" id="HGNC:20882">
    <property type="gene designation" value="PAK1IP1"/>
</dbReference>
<dbReference type="HPA" id="ENSG00000111845">
    <property type="expression patterns" value="Low tissue specificity"/>
</dbReference>
<dbReference type="MIM" id="607811">
    <property type="type" value="gene"/>
</dbReference>
<dbReference type="neXtProt" id="NX_Q9NWT1"/>
<dbReference type="OpenTargets" id="ENSG00000111845"/>
<dbReference type="PharmGKB" id="PA134928299"/>
<dbReference type="VEuPathDB" id="HostDB:ENSG00000111845"/>
<dbReference type="eggNOG" id="KOG0294">
    <property type="taxonomic scope" value="Eukaryota"/>
</dbReference>
<dbReference type="GeneTree" id="ENSGT00390000001263"/>
<dbReference type="HOGENOM" id="CLU_031466_2_0_1"/>
<dbReference type="InParanoid" id="Q9NWT1"/>
<dbReference type="OMA" id="IIIWRTK"/>
<dbReference type="OrthoDB" id="308449at2759"/>
<dbReference type="PAN-GO" id="Q9NWT1">
    <property type="GO annotations" value="0 GO annotations based on evolutionary models"/>
</dbReference>
<dbReference type="PhylomeDB" id="Q9NWT1"/>
<dbReference type="TreeFam" id="TF326684"/>
<dbReference type="PathwayCommons" id="Q9NWT1"/>
<dbReference type="SignaLink" id="Q9NWT1"/>
<dbReference type="BioGRID-ORCS" id="55003">
    <property type="hits" value="787 hits in 1134 CRISPR screens"/>
</dbReference>
<dbReference type="CD-CODE" id="91857CE7">
    <property type="entry name" value="Nucleolus"/>
</dbReference>
<dbReference type="ChiTaRS" id="PAK1IP1">
    <property type="organism name" value="human"/>
</dbReference>
<dbReference type="GeneWiki" id="PAK1IP1"/>
<dbReference type="GenomeRNAi" id="55003"/>
<dbReference type="Pharos" id="Q9NWT1">
    <property type="development level" value="Tbio"/>
</dbReference>
<dbReference type="PRO" id="PR:Q9NWT1"/>
<dbReference type="Proteomes" id="UP000005640">
    <property type="component" value="Chromosome 6"/>
</dbReference>
<dbReference type="RNAct" id="Q9NWT1">
    <property type="molecule type" value="protein"/>
</dbReference>
<dbReference type="Bgee" id="ENSG00000111845">
    <property type="expression patterns" value="Expressed in prostate gland and 97 other cell types or tissues"/>
</dbReference>
<dbReference type="ExpressionAtlas" id="Q9NWT1">
    <property type="expression patterns" value="baseline and differential"/>
</dbReference>
<dbReference type="GO" id="GO:0005730">
    <property type="term" value="C:nucleolus"/>
    <property type="evidence" value="ECO:0000314"/>
    <property type="project" value="HPA"/>
</dbReference>
<dbReference type="GO" id="GO:0004860">
    <property type="term" value="F:protein kinase inhibitor activity"/>
    <property type="evidence" value="ECO:0000318"/>
    <property type="project" value="GO_Central"/>
</dbReference>
<dbReference type="GO" id="GO:0008283">
    <property type="term" value="P:cell population proliferation"/>
    <property type="evidence" value="ECO:0007669"/>
    <property type="project" value="Ensembl"/>
</dbReference>
<dbReference type="GO" id="GO:0000463">
    <property type="term" value="P:maturation of LSU-rRNA from tricistronic rRNA transcript (SSU-rRNA, 5.8S rRNA, LSU-rRNA)"/>
    <property type="evidence" value="ECO:0000318"/>
    <property type="project" value="GO_Central"/>
</dbReference>
<dbReference type="GO" id="GO:0009968">
    <property type="term" value="P:negative regulation of signal transduction"/>
    <property type="evidence" value="ECO:0007669"/>
    <property type="project" value="UniProtKB-KW"/>
</dbReference>
<dbReference type="GO" id="GO:1901796">
    <property type="term" value="P:regulation of signal transduction by p53 class mediator"/>
    <property type="evidence" value="ECO:0000315"/>
    <property type="project" value="UniProtKB"/>
</dbReference>
<dbReference type="GO" id="GO:0042273">
    <property type="term" value="P:ribosomal large subunit biogenesis"/>
    <property type="evidence" value="ECO:0000315"/>
    <property type="project" value="UniProtKB"/>
</dbReference>
<dbReference type="GO" id="GO:0060021">
    <property type="term" value="P:roof of mouth development"/>
    <property type="evidence" value="ECO:0007669"/>
    <property type="project" value="Ensembl"/>
</dbReference>
<dbReference type="FunFam" id="2.130.10.10:FF:001114">
    <property type="entry name" value="p21-activated protein kinase-interacting protein 1"/>
    <property type="match status" value="1"/>
</dbReference>
<dbReference type="FunFam" id="2.130.10.10:FF:000424">
    <property type="entry name" value="p21-activated protein kinase-interacting protein 1-like"/>
    <property type="match status" value="1"/>
</dbReference>
<dbReference type="Gene3D" id="2.130.10.10">
    <property type="entry name" value="YVTN repeat-like/Quinoprotein amine dehydrogenase"/>
    <property type="match status" value="2"/>
</dbReference>
<dbReference type="InterPro" id="IPR020472">
    <property type="entry name" value="G-protein_beta_WD-40_rep"/>
</dbReference>
<dbReference type="InterPro" id="IPR051959">
    <property type="entry name" value="PAK1-Kinase_Regulator"/>
</dbReference>
<dbReference type="InterPro" id="IPR015943">
    <property type="entry name" value="WD40/YVTN_repeat-like_dom_sf"/>
</dbReference>
<dbReference type="InterPro" id="IPR019775">
    <property type="entry name" value="WD40_repeat_CS"/>
</dbReference>
<dbReference type="InterPro" id="IPR036322">
    <property type="entry name" value="WD40_repeat_dom_sf"/>
</dbReference>
<dbReference type="InterPro" id="IPR001680">
    <property type="entry name" value="WD40_rpt"/>
</dbReference>
<dbReference type="PANTHER" id="PTHR44675:SF1">
    <property type="entry name" value="P21-ACTIVATED PROTEIN KINASE-INTERACTING PROTEIN 1"/>
    <property type="match status" value="1"/>
</dbReference>
<dbReference type="PANTHER" id="PTHR44675">
    <property type="entry name" value="PAK1 INTERACTING PROTEIN 1"/>
    <property type="match status" value="1"/>
</dbReference>
<dbReference type="Pfam" id="PF00400">
    <property type="entry name" value="WD40"/>
    <property type="match status" value="4"/>
</dbReference>
<dbReference type="PRINTS" id="PR00320">
    <property type="entry name" value="GPROTEINBRPT"/>
</dbReference>
<dbReference type="SMART" id="SM00320">
    <property type="entry name" value="WD40"/>
    <property type="match status" value="5"/>
</dbReference>
<dbReference type="SUPFAM" id="SSF50978">
    <property type="entry name" value="WD40 repeat-like"/>
    <property type="match status" value="1"/>
</dbReference>
<dbReference type="PROSITE" id="PS00678">
    <property type="entry name" value="WD_REPEATS_1"/>
    <property type="match status" value="2"/>
</dbReference>
<dbReference type="PROSITE" id="PS50082">
    <property type="entry name" value="WD_REPEATS_2"/>
    <property type="match status" value="4"/>
</dbReference>
<dbReference type="PROSITE" id="PS50294">
    <property type="entry name" value="WD_REPEATS_REGION"/>
    <property type="match status" value="2"/>
</dbReference>
<keyword id="KW-0539">Nucleus</keyword>
<keyword id="KW-0597">Phosphoprotein</keyword>
<keyword id="KW-1267">Proteomics identification</keyword>
<keyword id="KW-1185">Reference proteome</keyword>
<keyword id="KW-0677">Repeat</keyword>
<keyword id="KW-0690">Ribosome biogenesis</keyword>
<keyword id="KW-0734">Signal transduction inhibitor</keyword>
<keyword id="KW-0853">WD repeat</keyword>
<accession>Q9NWT1</accession>
<accession>Q5T4J2</accession>
<accession>Q96QJ8</accession>
<accession>Q96T87</accession>
<name>PK1IP_HUMAN</name>
<evidence type="ECO:0000256" key="1">
    <source>
        <dbReference type="SAM" id="MobiDB-lite"/>
    </source>
</evidence>
<evidence type="ECO:0000269" key="2">
    <source>
    </source>
</evidence>
<evidence type="ECO:0000269" key="3">
    <source>
    </source>
</evidence>
<evidence type="ECO:0000269" key="4">
    <source>
    </source>
</evidence>
<evidence type="ECO:0000305" key="5"/>
<evidence type="ECO:0007744" key="6">
    <source>
    </source>
</evidence>
<evidence type="ECO:0007744" key="7">
    <source>
    </source>
</evidence>
<evidence type="ECO:0007744" key="8">
    <source>
    </source>
</evidence>
<evidence type="ECO:0007744" key="9">
    <source>
    </source>
</evidence>
<sequence length="392" mass="43964">MELVAGCYEQVLFGFAVHPEPEACGDHEQWTLVADFTHHAHTASLSAVAVNSRFVVTGSKDETIHIYDMKKKIEHGALVHHSGTITCLKFYGNRHLISGAEDGLICIWDAKKWECLKSIKAHKGQVTFLSIHPSGKLALSVGTDKTLRTWNLVEGRSAFIKNIKQNAHIVEWSPRGEQYVVIIQNKIDIYQLDTASISGTITNEKRISSVKFLSESVLAVAGDEEVIRFFDCDSLVCLCEFKAHENRVKDMFSFEIPEHHVIVSASSDGFIKMWKLKQDKKVPPSLLCEINTNARLTCLGVWLDKVADMKESLPPAAEPSPVSKEQSKIGKKEPGDTVHKEEKRSKPNTKKRGLTGDSKKATKESGLISTKKRKMVEMLEKKRKKKKIKTMQ</sequence>